<keyword id="KW-0150">Chloroplast</keyword>
<keyword id="KW-0934">Plastid</keyword>
<keyword id="KW-1185">Reference proteome</keyword>
<keyword id="KW-0687">Ribonucleoprotein</keyword>
<keyword id="KW-0689">Ribosomal protein</keyword>
<keyword id="KW-0694">RNA-binding</keyword>
<keyword id="KW-0699">rRNA-binding</keyword>
<name>RR4_ORYNI</name>
<dbReference type="EMBL" id="AP006728">
    <property type="protein sequence ID" value="BAD26780.1"/>
    <property type="molecule type" value="Genomic_DNA"/>
</dbReference>
<dbReference type="RefSeq" id="YP_052751.1">
    <property type="nucleotide sequence ID" value="NC_005973.1"/>
</dbReference>
<dbReference type="SMR" id="Q6ENH2"/>
<dbReference type="STRING" id="4536.Q6ENH2"/>
<dbReference type="GeneID" id="2885947"/>
<dbReference type="Proteomes" id="UP000006591">
    <property type="component" value="Chloroplast"/>
</dbReference>
<dbReference type="GO" id="GO:0009507">
    <property type="term" value="C:chloroplast"/>
    <property type="evidence" value="ECO:0007669"/>
    <property type="project" value="UniProtKB-SubCell"/>
</dbReference>
<dbReference type="GO" id="GO:0009536">
    <property type="term" value="C:plastid"/>
    <property type="evidence" value="ECO:0000305"/>
    <property type="project" value="Gramene"/>
</dbReference>
<dbReference type="GO" id="GO:0015935">
    <property type="term" value="C:small ribosomal subunit"/>
    <property type="evidence" value="ECO:0007669"/>
    <property type="project" value="InterPro"/>
</dbReference>
<dbReference type="GO" id="GO:0019843">
    <property type="term" value="F:rRNA binding"/>
    <property type="evidence" value="ECO:0007669"/>
    <property type="project" value="UniProtKB-UniRule"/>
</dbReference>
<dbReference type="GO" id="GO:0003735">
    <property type="term" value="F:structural constituent of ribosome"/>
    <property type="evidence" value="ECO:0007669"/>
    <property type="project" value="InterPro"/>
</dbReference>
<dbReference type="GO" id="GO:0042274">
    <property type="term" value="P:ribosomal small subunit biogenesis"/>
    <property type="evidence" value="ECO:0007669"/>
    <property type="project" value="TreeGrafter"/>
</dbReference>
<dbReference type="GO" id="GO:0006412">
    <property type="term" value="P:translation"/>
    <property type="evidence" value="ECO:0007669"/>
    <property type="project" value="UniProtKB-UniRule"/>
</dbReference>
<dbReference type="CDD" id="cd00165">
    <property type="entry name" value="S4"/>
    <property type="match status" value="1"/>
</dbReference>
<dbReference type="FunFam" id="1.10.1050.10:FF:000002">
    <property type="entry name" value="30S ribosomal protein S4, chloroplastic"/>
    <property type="match status" value="1"/>
</dbReference>
<dbReference type="FunFam" id="3.10.290.10:FF:000081">
    <property type="entry name" value="30S ribosomal protein S4, chloroplastic"/>
    <property type="match status" value="1"/>
</dbReference>
<dbReference type="Gene3D" id="1.10.1050.10">
    <property type="entry name" value="Ribosomal Protein S4 Delta 41, Chain A, domain 1"/>
    <property type="match status" value="1"/>
</dbReference>
<dbReference type="Gene3D" id="3.10.290.10">
    <property type="entry name" value="RNA-binding S4 domain"/>
    <property type="match status" value="1"/>
</dbReference>
<dbReference type="HAMAP" id="MF_01306_B">
    <property type="entry name" value="Ribosomal_uS4_B"/>
    <property type="match status" value="1"/>
</dbReference>
<dbReference type="InterPro" id="IPR022801">
    <property type="entry name" value="Ribosomal_uS4"/>
</dbReference>
<dbReference type="InterPro" id="IPR005709">
    <property type="entry name" value="Ribosomal_uS4_bac-type"/>
</dbReference>
<dbReference type="InterPro" id="IPR018079">
    <property type="entry name" value="Ribosomal_uS4_CS"/>
</dbReference>
<dbReference type="InterPro" id="IPR001912">
    <property type="entry name" value="Ribosomal_uS4_N"/>
</dbReference>
<dbReference type="InterPro" id="IPR002942">
    <property type="entry name" value="S4_RNA-bd"/>
</dbReference>
<dbReference type="InterPro" id="IPR036986">
    <property type="entry name" value="S4_RNA-bd_sf"/>
</dbReference>
<dbReference type="NCBIfam" id="NF003717">
    <property type="entry name" value="PRK05327.1"/>
    <property type="match status" value="1"/>
</dbReference>
<dbReference type="NCBIfam" id="TIGR01017">
    <property type="entry name" value="rpsD_bact"/>
    <property type="match status" value="1"/>
</dbReference>
<dbReference type="PANTHER" id="PTHR11831">
    <property type="entry name" value="30S 40S RIBOSOMAL PROTEIN"/>
    <property type="match status" value="1"/>
</dbReference>
<dbReference type="PANTHER" id="PTHR11831:SF4">
    <property type="entry name" value="SMALL RIBOSOMAL SUBUNIT PROTEIN US4M"/>
    <property type="match status" value="1"/>
</dbReference>
<dbReference type="Pfam" id="PF00163">
    <property type="entry name" value="Ribosomal_S4"/>
    <property type="match status" value="1"/>
</dbReference>
<dbReference type="Pfam" id="PF01479">
    <property type="entry name" value="S4"/>
    <property type="match status" value="1"/>
</dbReference>
<dbReference type="SMART" id="SM01390">
    <property type="entry name" value="Ribosomal_S4"/>
    <property type="match status" value="1"/>
</dbReference>
<dbReference type="SMART" id="SM00363">
    <property type="entry name" value="S4"/>
    <property type="match status" value="1"/>
</dbReference>
<dbReference type="SUPFAM" id="SSF55174">
    <property type="entry name" value="Alpha-L RNA-binding motif"/>
    <property type="match status" value="1"/>
</dbReference>
<dbReference type="PROSITE" id="PS00632">
    <property type="entry name" value="RIBOSOMAL_S4"/>
    <property type="match status" value="1"/>
</dbReference>
<dbReference type="PROSITE" id="PS50889">
    <property type="entry name" value="S4"/>
    <property type="match status" value="1"/>
</dbReference>
<gene>
    <name type="primary">rps4</name>
</gene>
<comment type="function">
    <text evidence="1">One of the primary rRNA binding proteins, it binds directly to 16S rRNA where it nucleates assembly of the body of the 30S subunit.</text>
</comment>
<comment type="function">
    <text evidence="1">With S5 and S12 plays an important role in translational accuracy.</text>
</comment>
<comment type="subunit">
    <text evidence="1">Part of the 30S ribosomal subunit. Contacts protein S5. The interaction surface between S4 and S5 is involved in control of translational fidelity (By similarity).</text>
</comment>
<comment type="subcellular location">
    <subcellularLocation>
        <location>Plastid</location>
        <location>Chloroplast</location>
    </subcellularLocation>
</comment>
<comment type="similarity">
    <text evidence="3">Belongs to the universal ribosomal protein uS4 family.</text>
</comment>
<protein>
    <recommendedName>
        <fullName evidence="3">Small ribosomal subunit protein uS4c</fullName>
    </recommendedName>
    <alternativeName>
        <fullName>30S ribosomal protein S4, chloroplastic</fullName>
    </alternativeName>
</protein>
<geneLocation type="chloroplast"/>
<feature type="chain" id="PRO_0000132641" description="Small ribosomal subunit protein uS4c">
    <location>
        <begin position="1"/>
        <end position="201"/>
    </location>
</feature>
<feature type="domain" description="S4 RNA-binding">
    <location>
        <begin position="89"/>
        <end position="150"/>
    </location>
</feature>
<feature type="region of interest" description="Disordered" evidence="2">
    <location>
        <begin position="20"/>
        <end position="39"/>
    </location>
</feature>
<reference key="1">
    <citation type="journal article" date="2004" name="Gene">
        <title>The complete nucleotide sequence of wild rice (Oryza nivara) chloroplast genome: first genome wide comparative sequence analysis of wild and cultivated rice.</title>
        <authorList>
            <person name="Masood M.S."/>
            <person name="Nishikawa T."/>
            <person name="Fukuoka S."/>
            <person name="Njenga P.K."/>
            <person name="Tsudzuki T."/>
            <person name="Kadowaki K."/>
        </authorList>
    </citation>
    <scope>NUCLEOTIDE SEQUENCE [LARGE SCALE GENOMIC DNA]</scope>
    <source>
        <strain evidence="4">cv. SL10</strain>
    </source>
</reference>
<accession>Q6ENH2</accession>
<sequence>MSRYRGPRFKKIRRLGALPGLTRKTPKSGSNLKKKFHSGKKEQYRIRLQEKQKLRFHYGLTERQLLRYVHIAGKAKSSTGQVLLQLLEMRLDNILFRLGMASTIPEARQLVNHRHILVNGRIVDIPSFRCKPRDIITTKDNQRSKRLVQNSIASSDPGKLPKHLTIDTLQYKGLVKKILDRKWVGLKINELLVVEYYSRQT</sequence>
<proteinExistence type="inferred from homology"/>
<organism>
    <name type="scientific">Oryza nivara</name>
    <name type="common">Indian wild rice</name>
    <name type="synonym">Oryza sativa f. spontanea</name>
    <dbReference type="NCBI Taxonomy" id="4536"/>
    <lineage>
        <taxon>Eukaryota</taxon>
        <taxon>Viridiplantae</taxon>
        <taxon>Streptophyta</taxon>
        <taxon>Embryophyta</taxon>
        <taxon>Tracheophyta</taxon>
        <taxon>Spermatophyta</taxon>
        <taxon>Magnoliopsida</taxon>
        <taxon>Liliopsida</taxon>
        <taxon>Poales</taxon>
        <taxon>Poaceae</taxon>
        <taxon>BOP clade</taxon>
        <taxon>Oryzoideae</taxon>
        <taxon>Oryzeae</taxon>
        <taxon>Oryzinae</taxon>
        <taxon>Oryza</taxon>
    </lineage>
</organism>
<evidence type="ECO:0000250" key="1"/>
<evidence type="ECO:0000256" key="2">
    <source>
        <dbReference type="SAM" id="MobiDB-lite"/>
    </source>
</evidence>
<evidence type="ECO:0000305" key="3"/>
<evidence type="ECO:0000312" key="4">
    <source>
        <dbReference type="Proteomes" id="UP000006591"/>
    </source>
</evidence>